<gene>
    <name evidence="1" type="primary">ligA</name>
    <name type="ordered locus">AHA_1229</name>
</gene>
<proteinExistence type="inferred from homology"/>
<sequence>MSDILSRHRQLCELLIEYGHQYYVLDNPTVPDAEYDRLMRELIVLEAEHPELKTPASPSVRVGGQPLTAFKQVRHEIPMLSLDNVFSGEELQAFEQRMRDRLKREVSFTFCCEPKLDGLAVSLLYVAGQLVQAATRGDGTTGEEITENVRTIKAIPLSLRGEGWPARLEVRGEVFMPKAGFEAMNAKALAAGEKVFVNPRNAAAGSLRQLDSRITASRPLAFYAYGVGVGGEQLGGSHFGRLNQLKEWGLPLSPEVKLKEGAAGCQAFHDDILARRGELPYEIDGVVYKVDAIPLQEELGFVARAPRWATAHKFPAQEEMTELENVEFQVGRTGAVTPVAKLKPVFVGGVTVSNATLHNADEIERLGVMIGDTVIVRRAGDVIPQIVAVVEAQRPADARAILFPTECPVCGSAVERLEGEAVTRCSGGLFCEAQRKEAIKHFAARRAMDVDGLGDKIVEQLVDKGLVKTPADLFSLNAIQLAGLERMGQKSALNLVAAIDAARSTTLPRFLFALGIREVGEATALNLANHFLTLDALRAASVEQLLEVADVGDIVAKHVYYFLRQPHNIEVLEALLAAGIHWPAIEKKEASEQPFAGKTFVLTGTLTTLSRNDAKAALQALGAKVAGSVSAKTDVLVAGEAAGSKLVKAQELGITVWSEEELQQALQG</sequence>
<organism>
    <name type="scientific">Aeromonas hydrophila subsp. hydrophila (strain ATCC 7966 / DSM 30187 / BCRC 13018 / CCUG 14551 / JCM 1027 / KCTC 2358 / NCIMB 9240 / NCTC 8049)</name>
    <dbReference type="NCBI Taxonomy" id="380703"/>
    <lineage>
        <taxon>Bacteria</taxon>
        <taxon>Pseudomonadati</taxon>
        <taxon>Pseudomonadota</taxon>
        <taxon>Gammaproteobacteria</taxon>
        <taxon>Aeromonadales</taxon>
        <taxon>Aeromonadaceae</taxon>
        <taxon>Aeromonas</taxon>
    </lineage>
</organism>
<name>DNLJ_AERHH</name>
<accession>A0KHL9</accession>
<dbReference type="EC" id="6.5.1.2" evidence="1"/>
<dbReference type="EMBL" id="CP000462">
    <property type="protein sequence ID" value="ABK36968.1"/>
    <property type="molecule type" value="Genomic_DNA"/>
</dbReference>
<dbReference type="RefSeq" id="WP_011705145.1">
    <property type="nucleotide sequence ID" value="NC_008570.1"/>
</dbReference>
<dbReference type="RefSeq" id="YP_855770.1">
    <property type="nucleotide sequence ID" value="NC_008570.1"/>
</dbReference>
<dbReference type="SMR" id="A0KHL9"/>
<dbReference type="STRING" id="380703.AHA_1229"/>
<dbReference type="EnsemblBacteria" id="ABK36968">
    <property type="protein sequence ID" value="ABK36968"/>
    <property type="gene ID" value="AHA_1229"/>
</dbReference>
<dbReference type="GeneID" id="4490605"/>
<dbReference type="KEGG" id="aha:AHA_1229"/>
<dbReference type="PATRIC" id="fig|380703.7.peg.1236"/>
<dbReference type="eggNOG" id="COG0272">
    <property type="taxonomic scope" value="Bacteria"/>
</dbReference>
<dbReference type="HOGENOM" id="CLU_007764_2_1_6"/>
<dbReference type="OrthoDB" id="9759736at2"/>
<dbReference type="Proteomes" id="UP000000756">
    <property type="component" value="Chromosome"/>
</dbReference>
<dbReference type="GO" id="GO:0005829">
    <property type="term" value="C:cytosol"/>
    <property type="evidence" value="ECO:0007669"/>
    <property type="project" value="TreeGrafter"/>
</dbReference>
<dbReference type="GO" id="GO:0003677">
    <property type="term" value="F:DNA binding"/>
    <property type="evidence" value="ECO:0007669"/>
    <property type="project" value="InterPro"/>
</dbReference>
<dbReference type="GO" id="GO:0003911">
    <property type="term" value="F:DNA ligase (NAD+) activity"/>
    <property type="evidence" value="ECO:0007669"/>
    <property type="project" value="UniProtKB-UniRule"/>
</dbReference>
<dbReference type="GO" id="GO:0046872">
    <property type="term" value="F:metal ion binding"/>
    <property type="evidence" value="ECO:0007669"/>
    <property type="project" value="UniProtKB-KW"/>
</dbReference>
<dbReference type="GO" id="GO:0006281">
    <property type="term" value="P:DNA repair"/>
    <property type="evidence" value="ECO:0007669"/>
    <property type="project" value="UniProtKB-KW"/>
</dbReference>
<dbReference type="GO" id="GO:0006260">
    <property type="term" value="P:DNA replication"/>
    <property type="evidence" value="ECO:0007669"/>
    <property type="project" value="UniProtKB-KW"/>
</dbReference>
<dbReference type="CDD" id="cd17748">
    <property type="entry name" value="BRCT_DNA_ligase_like"/>
    <property type="match status" value="1"/>
</dbReference>
<dbReference type="CDD" id="cd00114">
    <property type="entry name" value="LIGANc"/>
    <property type="match status" value="1"/>
</dbReference>
<dbReference type="FunFam" id="1.10.150.20:FF:000006">
    <property type="entry name" value="DNA ligase"/>
    <property type="match status" value="1"/>
</dbReference>
<dbReference type="FunFam" id="1.10.150.20:FF:000007">
    <property type="entry name" value="DNA ligase"/>
    <property type="match status" value="1"/>
</dbReference>
<dbReference type="FunFam" id="1.10.287.610:FF:000002">
    <property type="entry name" value="DNA ligase"/>
    <property type="match status" value="1"/>
</dbReference>
<dbReference type="FunFam" id="2.40.50.140:FF:000012">
    <property type="entry name" value="DNA ligase"/>
    <property type="match status" value="1"/>
</dbReference>
<dbReference type="FunFam" id="3.30.470.30:FF:000001">
    <property type="entry name" value="DNA ligase"/>
    <property type="match status" value="1"/>
</dbReference>
<dbReference type="FunFam" id="6.20.10.30:FF:000001">
    <property type="entry name" value="DNA ligase"/>
    <property type="match status" value="1"/>
</dbReference>
<dbReference type="Gene3D" id="6.20.10.30">
    <property type="match status" value="1"/>
</dbReference>
<dbReference type="Gene3D" id="1.10.150.20">
    <property type="entry name" value="5' to 3' exonuclease, C-terminal subdomain"/>
    <property type="match status" value="2"/>
</dbReference>
<dbReference type="Gene3D" id="3.40.50.10190">
    <property type="entry name" value="BRCT domain"/>
    <property type="match status" value="1"/>
</dbReference>
<dbReference type="Gene3D" id="3.30.470.30">
    <property type="entry name" value="DNA ligase/mRNA capping enzyme"/>
    <property type="match status" value="1"/>
</dbReference>
<dbReference type="Gene3D" id="1.10.287.610">
    <property type="entry name" value="Helix hairpin bin"/>
    <property type="match status" value="1"/>
</dbReference>
<dbReference type="Gene3D" id="2.40.50.140">
    <property type="entry name" value="Nucleic acid-binding proteins"/>
    <property type="match status" value="1"/>
</dbReference>
<dbReference type="HAMAP" id="MF_01588">
    <property type="entry name" value="DNA_ligase_A"/>
    <property type="match status" value="1"/>
</dbReference>
<dbReference type="InterPro" id="IPR001357">
    <property type="entry name" value="BRCT_dom"/>
</dbReference>
<dbReference type="InterPro" id="IPR036420">
    <property type="entry name" value="BRCT_dom_sf"/>
</dbReference>
<dbReference type="InterPro" id="IPR041663">
    <property type="entry name" value="DisA/LigA_HHH"/>
</dbReference>
<dbReference type="InterPro" id="IPR001679">
    <property type="entry name" value="DNA_ligase"/>
</dbReference>
<dbReference type="InterPro" id="IPR018239">
    <property type="entry name" value="DNA_ligase_AS"/>
</dbReference>
<dbReference type="InterPro" id="IPR033136">
    <property type="entry name" value="DNA_ligase_CS"/>
</dbReference>
<dbReference type="InterPro" id="IPR013839">
    <property type="entry name" value="DNAligase_adenylation"/>
</dbReference>
<dbReference type="InterPro" id="IPR013840">
    <property type="entry name" value="DNAligase_N"/>
</dbReference>
<dbReference type="InterPro" id="IPR003583">
    <property type="entry name" value="Hlx-hairpin-Hlx_DNA-bd_motif"/>
</dbReference>
<dbReference type="InterPro" id="IPR012340">
    <property type="entry name" value="NA-bd_OB-fold"/>
</dbReference>
<dbReference type="InterPro" id="IPR004150">
    <property type="entry name" value="NAD_DNA_ligase_OB"/>
</dbReference>
<dbReference type="InterPro" id="IPR010994">
    <property type="entry name" value="RuvA_2-like"/>
</dbReference>
<dbReference type="InterPro" id="IPR004149">
    <property type="entry name" value="Znf_DNAligase_C4"/>
</dbReference>
<dbReference type="NCBIfam" id="TIGR00575">
    <property type="entry name" value="dnlj"/>
    <property type="match status" value="1"/>
</dbReference>
<dbReference type="NCBIfam" id="NF005932">
    <property type="entry name" value="PRK07956.1"/>
    <property type="match status" value="1"/>
</dbReference>
<dbReference type="PANTHER" id="PTHR23389">
    <property type="entry name" value="CHROMOSOME TRANSMISSION FIDELITY FACTOR 18"/>
    <property type="match status" value="1"/>
</dbReference>
<dbReference type="PANTHER" id="PTHR23389:SF9">
    <property type="entry name" value="DNA LIGASE"/>
    <property type="match status" value="1"/>
</dbReference>
<dbReference type="Pfam" id="PF00533">
    <property type="entry name" value="BRCT"/>
    <property type="match status" value="1"/>
</dbReference>
<dbReference type="Pfam" id="PF01653">
    <property type="entry name" value="DNA_ligase_aden"/>
    <property type="match status" value="1"/>
</dbReference>
<dbReference type="Pfam" id="PF03120">
    <property type="entry name" value="DNA_ligase_OB"/>
    <property type="match status" value="1"/>
</dbReference>
<dbReference type="Pfam" id="PF03119">
    <property type="entry name" value="DNA_ligase_ZBD"/>
    <property type="match status" value="1"/>
</dbReference>
<dbReference type="Pfam" id="PF12826">
    <property type="entry name" value="HHH_2"/>
    <property type="match status" value="1"/>
</dbReference>
<dbReference type="Pfam" id="PF14520">
    <property type="entry name" value="HHH_5"/>
    <property type="match status" value="1"/>
</dbReference>
<dbReference type="Pfam" id="PF22745">
    <property type="entry name" value="Nlig-Ia"/>
    <property type="match status" value="1"/>
</dbReference>
<dbReference type="PIRSF" id="PIRSF001604">
    <property type="entry name" value="LigA"/>
    <property type="match status" value="1"/>
</dbReference>
<dbReference type="SMART" id="SM00292">
    <property type="entry name" value="BRCT"/>
    <property type="match status" value="1"/>
</dbReference>
<dbReference type="SMART" id="SM00278">
    <property type="entry name" value="HhH1"/>
    <property type="match status" value="4"/>
</dbReference>
<dbReference type="SMART" id="SM00532">
    <property type="entry name" value="LIGANc"/>
    <property type="match status" value="1"/>
</dbReference>
<dbReference type="SUPFAM" id="SSF52113">
    <property type="entry name" value="BRCT domain"/>
    <property type="match status" value="1"/>
</dbReference>
<dbReference type="SUPFAM" id="SSF56091">
    <property type="entry name" value="DNA ligase/mRNA capping enzyme, catalytic domain"/>
    <property type="match status" value="1"/>
</dbReference>
<dbReference type="SUPFAM" id="SSF50249">
    <property type="entry name" value="Nucleic acid-binding proteins"/>
    <property type="match status" value="1"/>
</dbReference>
<dbReference type="SUPFAM" id="SSF47781">
    <property type="entry name" value="RuvA domain 2-like"/>
    <property type="match status" value="1"/>
</dbReference>
<dbReference type="PROSITE" id="PS50172">
    <property type="entry name" value="BRCT"/>
    <property type="match status" value="1"/>
</dbReference>
<dbReference type="PROSITE" id="PS01055">
    <property type="entry name" value="DNA_LIGASE_N1"/>
    <property type="match status" value="1"/>
</dbReference>
<dbReference type="PROSITE" id="PS01056">
    <property type="entry name" value="DNA_LIGASE_N2"/>
    <property type="match status" value="1"/>
</dbReference>
<reference key="1">
    <citation type="journal article" date="2006" name="J. Bacteriol.">
        <title>Genome sequence of Aeromonas hydrophila ATCC 7966T: jack of all trades.</title>
        <authorList>
            <person name="Seshadri R."/>
            <person name="Joseph S.W."/>
            <person name="Chopra A.K."/>
            <person name="Sha J."/>
            <person name="Shaw J."/>
            <person name="Graf J."/>
            <person name="Haft D.H."/>
            <person name="Wu M."/>
            <person name="Ren Q."/>
            <person name="Rosovitz M.J."/>
            <person name="Madupu R."/>
            <person name="Tallon L."/>
            <person name="Kim M."/>
            <person name="Jin S."/>
            <person name="Vuong H."/>
            <person name="Stine O.C."/>
            <person name="Ali A."/>
            <person name="Horneman A.J."/>
            <person name="Heidelberg J.F."/>
        </authorList>
    </citation>
    <scope>NUCLEOTIDE SEQUENCE [LARGE SCALE GENOMIC DNA]</scope>
    <source>
        <strain>ATCC 7966 / DSM 30187 / BCRC 13018 / CCUG 14551 / JCM 1027 / KCTC 2358 / NCIMB 9240 / NCTC 8049</strain>
    </source>
</reference>
<keyword id="KW-0227">DNA damage</keyword>
<keyword id="KW-0234">DNA repair</keyword>
<keyword id="KW-0235">DNA replication</keyword>
<keyword id="KW-0436">Ligase</keyword>
<keyword id="KW-0460">Magnesium</keyword>
<keyword id="KW-0464">Manganese</keyword>
<keyword id="KW-0479">Metal-binding</keyword>
<keyword id="KW-0520">NAD</keyword>
<keyword id="KW-1185">Reference proteome</keyword>
<keyword id="KW-0862">Zinc</keyword>
<protein>
    <recommendedName>
        <fullName evidence="1">DNA ligase</fullName>
        <ecNumber evidence="1">6.5.1.2</ecNumber>
    </recommendedName>
    <alternativeName>
        <fullName evidence="1">Polydeoxyribonucleotide synthase [NAD(+)]</fullName>
    </alternativeName>
</protein>
<evidence type="ECO:0000255" key="1">
    <source>
        <dbReference type="HAMAP-Rule" id="MF_01588"/>
    </source>
</evidence>
<comment type="function">
    <text evidence="1">DNA ligase that catalyzes the formation of phosphodiester linkages between 5'-phosphoryl and 3'-hydroxyl groups in double-stranded DNA using NAD as a coenzyme and as the energy source for the reaction. It is essential for DNA replication and repair of damaged DNA.</text>
</comment>
<comment type="catalytic activity">
    <reaction evidence="1">
        <text>NAD(+) + (deoxyribonucleotide)n-3'-hydroxyl + 5'-phospho-(deoxyribonucleotide)m = (deoxyribonucleotide)n+m + AMP + beta-nicotinamide D-nucleotide.</text>
        <dbReference type="EC" id="6.5.1.2"/>
    </reaction>
</comment>
<comment type="cofactor">
    <cofactor evidence="1">
        <name>Mg(2+)</name>
        <dbReference type="ChEBI" id="CHEBI:18420"/>
    </cofactor>
    <cofactor evidence="1">
        <name>Mn(2+)</name>
        <dbReference type="ChEBI" id="CHEBI:29035"/>
    </cofactor>
</comment>
<comment type="similarity">
    <text evidence="1">Belongs to the NAD-dependent DNA ligase family. LigA subfamily.</text>
</comment>
<feature type="chain" id="PRO_0000313104" description="DNA ligase">
    <location>
        <begin position="1"/>
        <end position="668"/>
    </location>
</feature>
<feature type="domain" description="BRCT" evidence="1">
    <location>
        <begin position="590"/>
        <end position="668"/>
    </location>
</feature>
<feature type="active site" description="N6-AMP-lysine intermediate" evidence="1">
    <location>
        <position position="115"/>
    </location>
</feature>
<feature type="binding site" evidence="1">
    <location>
        <begin position="32"/>
        <end position="36"/>
    </location>
    <ligand>
        <name>NAD(+)</name>
        <dbReference type="ChEBI" id="CHEBI:57540"/>
    </ligand>
</feature>
<feature type="binding site" evidence="1">
    <location>
        <begin position="81"/>
        <end position="82"/>
    </location>
    <ligand>
        <name>NAD(+)</name>
        <dbReference type="ChEBI" id="CHEBI:57540"/>
    </ligand>
</feature>
<feature type="binding site" evidence="1">
    <location>
        <position position="113"/>
    </location>
    <ligand>
        <name>NAD(+)</name>
        <dbReference type="ChEBI" id="CHEBI:57540"/>
    </ligand>
</feature>
<feature type="binding site" evidence="1">
    <location>
        <position position="136"/>
    </location>
    <ligand>
        <name>NAD(+)</name>
        <dbReference type="ChEBI" id="CHEBI:57540"/>
    </ligand>
</feature>
<feature type="binding site" evidence="1">
    <location>
        <position position="173"/>
    </location>
    <ligand>
        <name>NAD(+)</name>
        <dbReference type="ChEBI" id="CHEBI:57540"/>
    </ligand>
</feature>
<feature type="binding site" evidence="1">
    <location>
        <position position="289"/>
    </location>
    <ligand>
        <name>NAD(+)</name>
        <dbReference type="ChEBI" id="CHEBI:57540"/>
    </ligand>
</feature>
<feature type="binding site" evidence="1">
    <location>
        <position position="313"/>
    </location>
    <ligand>
        <name>NAD(+)</name>
        <dbReference type="ChEBI" id="CHEBI:57540"/>
    </ligand>
</feature>
<feature type="binding site" evidence="1">
    <location>
        <position position="407"/>
    </location>
    <ligand>
        <name>Zn(2+)</name>
        <dbReference type="ChEBI" id="CHEBI:29105"/>
    </ligand>
</feature>
<feature type="binding site" evidence="1">
    <location>
        <position position="410"/>
    </location>
    <ligand>
        <name>Zn(2+)</name>
        <dbReference type="ChEBI" id="CHEBI:29105"/>
    </ligand>
</feature>
<feature type="binding site" evidence="1">
    <location>
        <position position="425"/>
    </location>
    <ligand>
        <name>Zn(2+)</name>
        <dbReference type="ChEBI" id="CHEBI:29105"/>
    </ligand>
</feature>
<feature type="binding site" evidence="1">
    <location>
        <position position="431"/>
    </location>
    <ligand>
        <name>Zn(2+)</name>
        <dbReference type="ChEBI" id="CHEBI:29105"/>
    </ligand>
</feature>